<keyword id="KW-0004">4Fe-4S</keyword>
<keyword id="KW-0149">Chlorophyll biosynthesis</keyword>
<keyword id="KW-0963">Cytoplasm</keyword>
<keyword id="KW-0408">Iron</keyword>
<keyword id="KW-0411">Iron-sulfur</keyword>
<keyword id="KW-0479">Metal-binding</keyword>
<keyword id="KW-0560">Oxidoreductase</keyword>
<keyword id="KW-0627">Porphyrin biosynthesis</keyword>
<keyword id="KW-0949">S-adenosyl-L-methionine</keyword>
<protein>
    <recommendedName>
        <fullName>Oxygen-independent coproporphyrinogen III oxidase</fullName>
        <shortName>CPO</shortName>
        <ecNumber evidence="1">1.3.98.3</ecNumber>
    </recommendedName>
    <alternativeName>
        <fullName>Coproporphyrinogen III dehydrogenase</fullName>
        <shortName>CPDH</shortName>
    </alternativeName>
</protein>
<feature type="chain" id="PRO_0000109953" description="Oxygen-independent coproporphyrinogen III oxidase">
    <location>
        <begin position="1" status="less than"/>
        <end position="325"/>
    </location>
</feature>
<feature type="domain" description="Radical SAM core" evidence="2">
    <location>
        <begin position="1" status="less than"/>
        <end position="151"/>
    </location>
</feature>
<feature type="binding site" evidence="1">
    <location>
        <position position="13"/>
    </location>
    <ligand>
        <name>S-adenosyl-L-methionine</name>
        <dbReference type="ChEBI" id="CHEBI:59789"/>
        <label>1</label>
    </ligand>
</feature>
<feature type="binding site" evidence="1">
    <location>
        <position position="40"/>
    </location>
    <ligand>
        <name>S-adenosyl-L-methionine</name>
        <dbReference type="ChEBI" id="CHEBI:59789"/>
        <label>2</label>
    </ligand>
</feature>
<feature type="binding site" evidence="1">
    <location>
        <position position="52"/>
    </location>
    <ligand>
        <name>S-adenosyl-L-methionine</name>
        <dbReference type="ChEBI" id="CHEBI:59789"/>
        <label>2</label>
    </ligand>
</feature>
<feature type="binding site" evidence="1">
    <location>
        <position position="77"/>
    </location>
    <ligand>
        <name>S-adenosyl-L-methionine</name>
        <dbReference type="ChEBI" id="CHEBI:59789"/>
        <label>2</label>
    </ligand>
</feature>
<feature type="binding site" evidence="1">
    <location>
        <position position="111"/>
    </location>
    <ligand>
        <name>S-adenosyl-L-methionine</name>
        <dbReference type="ChEBI" id="CHEBI:59789"/>
        <label>2</label>
    </ligand>
</feature>
<feature type="binding site" evidence="1">
    <location>
        <position position="197"/>
    </location>
    <ligand>
        <name>S-adenosyl-L-methionine</name>
        <dbReference type="ChEBI" id="CHEBI:59789"/>
        <label>1</label>
    </ligand>
</feature>
<feature type="non-terminal residue">
    <location>
        <position position="1"/>
    </location>
</feature>
<organism>
    <name type="scientific">Thermostichus vulcanus</name>
    <name type="common">Synechococcus vulcanus</name>
    <dbReference type="NCBI Taxonomy" id="32053"/>
    <lineage>
        <taxon>Bacteria</taxon>
        <taxon>Bacillati</taxon>
        <taxon>Cyanobacteriota</taxon>
        <taxon>Cyanophyceae</taxon>
        <taxon>Thermostichales</taxon>
        <taxon>Thermostichaceae</taxon>
        <taxon>Thermostichus</taxon>
    </lineage>
</organism>
<accession>O31067</accession>
<dbReference type="EC" id="1.3.98.3" evidence="1"/>
<dbReference type="EMBL" id="AF027176">
    <property type="protein sequence ID" value="AAB84028.1"/>
    <property type="molecule type" value="Genomic_DNA"/>
</dbReference>
<dbReference type="SMR" id="O31067"/>
<dbReference type="UniPathway" id="UPA00251">
    <property type="reaction ID" value="UER00323"/>
</dbReference>
<dbReference type="GO" id="GO:0005737">
    <property type="term" value="C:cytoplasm"/>
    <property type="evidence" value="ECO:0000250"/>
    <property type="project" value="UniProtKB"/>
</dbReference>
<dbReference type="GO" id="GO:0051539">
    <property type="term" value="F:4 iron, 4 sulfur cluster binding"/>
    <property type="evidence" value="ECO:0000250"/>
    <property type="project" value="UniProtKB"/>
</dbReference>
<dbReference type="GO" id="GO:0051989">
    <property type="term" value="F:coproporphyrinogen dehydrogenase activity"/>
    <property type="evidence" value="ECO:0000250"/>
    <property type="project" value="UniProtKB"/>
</dbReference>
<dbReference type="GO" id="GO:0004109">
    <property type="term" value="F:coproporphyrinogen oxidase activity"/>
    <property type="evidence" value="ECO:0007669"/>
    <property type="project" value="InterPro"/>
</dbReference>
<dbReference type="GO" id="GO:0046872">
    <property type="term" value="F:metal ion binding"/>
    <property type="evidence" value="ECO:0007669"/>
    <property type="project" value="UniProtKB-KW"/>
</dbReference>
<dbReference type="GO" id="GO:0015995">
    <property type="term" value="P:chlorophyll biosynthetic process"/>
    <property type="evidence" value="ECO:0007669"/>
    <property type="project" value="UniProtKB-KW"/>
</dbReference>
<dbReference type="GO" id="GO:0006779">
    <property type="term" value="P:porphyrin-containing compound biosynthetic process"/>
    <property type="evidence" value="ECO:0000250"/>
    <property type="project" value="UniProtKB"/>
</dbReference>
<dbReference type="GO" id="GO:0006782">
    <property type="term" value="P:protoporphyrinogen IX biosynthetic process"/>
    <property type="evidence" value="ECO:0000250"/>
    <property type="project" value="UniProtKB"/>
</dbReference>
<dbReference type="CDD" id="cd01335">
    <property type="entry name" value="Radical_SAM"/>
    <property type="match status" value="1"/>
</dbReference>
<dbReference type="FunFam" id="1.10.10.920:FF:000002">
    <property type="entry name" value="Coproporphyrinogen-III oxidase"/>
    <property type="match status" value="1"/>
</dbReference>
<dbReference type="Gene3D" id="1.10.10.920">
    <property type="match status" value="1"/>
</dbReference>
<dbReference type="Gene3D" id="3.30.750.200">
    <property type="match status" value="1"/>
</dbReference>
<dbReference type="InterPro" id="IPR004558">
    <property type="entry name" value="Coprogen_oxidase_HemN"/>
</dbReference>
<dbReference type="InterPro" id="IPR034505">
    <property type="entry name" value="Coproporphyrinogen-III_oxidase"/>
</dbReference>
<dbReference type="InterPro" id="IPR006638">
    <property type="entry name" value="Elp3/MiaA/NifB-like_rSAM"/>
</dbReference>
<dbReference type="InterPro" id="IPR010723">
    <property type="entry name" value="HemN_C"/>
</dbReference>
<dbReference type="InterPro" id="IPR007197">
    <property type="entry name" value="rSAM"/>
</dbReference>
<dbReference type="NCBIfam" id="TIGR00538">
    <property type="entry name" value="hemN"/>
    <property type="match status" value="1"/>
</dbReference>
<dbReference type="PANTHER" id="PTHR13932">
    <property type="entry name" value="COPROPORPHYRINIGEN III OXIDASE"/>
    <property type="match status" value="1"/>
</dbReference>
<dbReference type="PANTHER" id="PTHR13932:SF6">
    <property type="entry name" value="OXYGEN-INDEPENDENT COPROPORPHYRINOGEN III OXIDASE"/>
    <property type="match status" value="1"/>
</dbReference>
<dbReference type="Pfam" id="PF06969">
    <property type="entry name" value="HemN_C"/>
    <property type="match status" value="1"/>
</dbReference>
<dbReference type="Pfam" id="PF04055">
    <property type="entry name" value="Radical_SAM"/>
    <property type="match status" value="1"/>
</dbReference>
<dbReference type="SMART" id="SM00729">
    <property type="entry name" value="Elp3"/>
    <property type="match status" value="1"/>
</dbReference>
<dbReference type="SUPFAM" id="SSF102114">
    <property type="entry name" value="Radical SAM enzymes"/>
    <property type="match status" value="1"/>
</dbReference>
<dbReference type="PROSITE" id="PS51918">
    <property type="entry name" value="RADICAL_SAM"/>
    <property type="match status" value="1"/>
</dbReference>
<evidence type="ECO:0000250" key="1">
    <source>
        <dbReference type="UniProtKB" id="P32131"/>
    </source>
</evidence>
<evidence type="ECO:0000255" key="2">
    <source>
        <dbReference type="PROSITE-ProRule" id="PRU01266"/>
    </source>
</evidence>
<evidence type="ECO:0000305" key="3"/>
<name>HEMN_THEVL</name>
<proteinExistence type="inferred from homology"/>
<gene>
    <name type="primary">hemN</name>
</gene>
<sequence>AFLMTKDAEISIEVSPRYINGDYFLRGRKLGFNRISFGVQDFDPQVQLAVNRVQRETMFFQVMEWIRAAEFESVNIDLIYGLPYQTVQSFEATIAKTLRLDPDRIAVFNFAYLPNLKPIQKRIDPTTLPDSATKLTILQRVIERLTSQGYRYIGMDHFAKPTDELAIAQRSGDLKRNFQGYTTLPTADLIGFGLTSISMLQAAYAQNQKHLATYFSDVAAGHHGPQECGFNCTVEDLLRRTIIMELMCQFSLDKGAIARQFNLDFDAYFASELAALRELAADGLLHLGRDRLEVTPVGRLLIRNITAVFDAYLQQKSGRTFSKAI</sequence>
<reference key="1">
    <citation type="submission" date="1997-09" db="EMBL/GenBank/DDBJ databases">
        <authorList>
            <person name="Los D.A."/>
        </authorList>
    </citation>
    <scope>NUCLEOTIDE SEQUENCE [GENOMIC DNA]</scope>
</reference>
<comment type="function">
    <text evidence="1">Involved in the heme and chlorophyll biosynthesis. Catalyzes the anaerobic oxidative decarboxylation of propionate groups of rings A and B of coproporphyrinogen III to yield the vinyl groups in protoporphyrinogen IX.</text>
</comment>
<comment type="catalytic activity">
    <reaction evidence="1">
        <text>coproporphyrinogen III + 2 S-adenosyl-L-methionine = protoporphyrinogen IX + 2 5'-deoxyadenosine + 2 L-methionine + 2 CO2</text>
        <dbReference type="Rhea" id="RHEA:15425"/>
        <dbReference type="ChEBI" id="CHEBI:16526"/>
        <dbReference type="ChEBI" id="CHEBI:17319"/>
        <dbReference type="ChEBI" id="CHEBI:57307"/>
        <dbReference type="ChEBI" id="CHEBI:57309"/>
        <dbReference type="ChEBI" id="CHEBI:57844"/>
        <dbReference type="ChEBI" id="CHEBI:59789"/>
        <dbReference type="EC" id="1.3.98.3"/>
    </reaction>
</comment>
<comment type="cofactor">
    <cofactor evidence="1">
        <name>[4Fe-4S] cluster</name>
        <dbReference type="ChEBI" id="CHEBI:49883"/>
    </cofactor>
    <text evidence="1">Binds 1 [4Fe-4S] cluster. The cluster is coordinated with 3 cysteines and an exchangeable S-adenosyl-L-methionine.</text>
</comment>
<comment type="pathway">
    <text>Porphyrin-containing compound metabolism; protoporphyrin-IX biosynthesis; protoporphyrinogen-IX from coproporphyrinogen-III (AdoMet route): step 1/1.</text>
</comment>
<comment type="subunit">
    <text evidence="1">Monomer.</text>
</comment>
<comment type="subcellular location">
    <subcellularLocation>
        <location evidence="1">Cytoplasm</location>
    </subcellularLocation>
</comment>
<comment type="similarity">
    <text evidence="3">Belongs to the anaerobic coproporphyrinogen-III oxidase family.</text>
</comment>